<keyword id="KW-0963">Cytoplasm</keyword>
<keyword id="KW-0378">Hydrolase</keyword>
<keyword id="KW-0546">Nucleotide metabolism</keyword>
<comment type="function">
    <text evidence="1">Nucleoside triphosphate pyrophosphatase that hydrolyzes dTTP and UTP. May have a dual role in cell division arrest and in preventing the incorporation of modified nucleotides into cellular nucleic acids.</text>
</comment>
<comment type="catalytic activity">
    <reaction evidence="1">
        <text>dTTP + H2O = dTMP + diphosphate + H(+)</text>
        <dbReference type="Rhea" id="RHEA:28534"/>
        <dbReference type="ChEBI" id="CHEBI:15377"/>
        <dbReference type="ChEBI" id="CHEBI:15378"/>
        <dbReference type="ChEBI" id="CHEBI:33019"/>
        <dbReference type="ChEBI" id="CHEBI:37568"/>
        <dbReference type="ChEBI" id="CHEBI:63528"/>
        <dbReference type="EC" id="3.6.1.9"/>
    </reaction>
</comment>
<comment type="catalytic activity">
    <reaction evidence="1">
        <text>UTP + H2O = UMP + diphosphate + H(+)</text>
        <dbReference type="Rhea" id="RHEA:29395"/>
        <dbReference type="ChEBI" id="CHEBI:15377"/>
        <dbReference type="ChEBI" id="CHEBI:15378"/>
        <dbReference type="ChEBI" id="CHEBI:33019"/>
        <dbReference type="ChEBI" id="CHEBI:46398"/>
        <dbReference type="ChEBI" id="CHEBI:57865"/>
        <dbReference type="EC" id="3.6.1.9"/>
    </reaction>
</comment>
<comment type="cofactor">
    <cofactor evidence="1">
        <name>a divalent metal cation</name>
        <dbReference type="ChEBI" id="CHEBI:60240"/>
    </cofactor>
</comment>
<comment type="subcellular location">
    <subcellularLocation>
        <location evidence="1">Cytoplasm</location>
    </subcellularLocation>
</comment>
<comment type="similarity">
    <text evidence="1">Belongs to the Maf family. YhdE subfamily.</text>
</comment>
<name>NTPPA_BACFR</name>
<dbReference type="EC" id="3.6.1.9" evidence="1"/>
<dbReference type="EMBL" id="AP006841">
    <property type="protein sequence ID" value="BAD50025.1"/>
    <property type="molecule type" value="Genomic_DNA"/>
</dbReference>
<dbReference type="RefSeq" id="WP_011203220.1">
    <property type="nucleotide sequence ID" value="NC_006347.1"/>
</dbReference>
<dbReference type="RefSeq" id="YP_100559.1">
    <property type="nucleotide sequence ID" value="NC_006347.1"/>
</dbReference>
<dbReference type="SMR" id="Q64R56"/>
<dbReference type="STRING" id="295405.BF3281"/>
<dbReference type="KEGG" id="bfr:BF3281"/>
<dbReference type="PATRIC" id="fig|295405.11.peg.3152"/>
<dbReference type="HOGENOM" id="CLU_040416_0_0_10"/>
<dbReference type="OrthoDB" id="9807767at2"/>
<dbReference type="Proteomes" id="UP000002197">
    <property type="component" value="Chromosome"/>
</dbReference>
<dbReference type="GO" id="GO:0005737">
    <property type="term" value="C:cytoplasm"/>
    <property type="evidence" value="ECO:0007669"/>
    <property type="project" value="UniProtKB-SubCell"/>
</dbReference>
<dbReference type="GO" id="GO:0036218">
    <property type="term" value="F:dTTP diphosphatase activity"/>
    <property type="evidence" value="ECO:0007669"/>
    <property type="project" value="RHEA"/>
</dbReference>
<dbReference type="GO" id="GO:0036221">
    <property type="term" value="F:UTP diphosphatase activity"/>
    <property type="evidence" value="ECO:0007669"/>
    <property type="project" value="RHEA"/>
</dbReference>
<dbReference type="GO" id="GO:0009117">
    <property type="term" value="P:nucleotide metabolic process"/>
    <property type="evidence" value="ECO:0007669"/>
    <property type="project" value="UniProtKB-KW"/>
</dbReference>
<dbReference type="CDD" id="cd00555">
    <property type="entry name" value="Maf"/>
    <property type="match status" value="1"/>
</dbReference>
<dbReference type="FunFam" id="3.90.950.10:FF:000005">
    <property type="entry name" value="7-methyl-GTP pyrophosphatase"/>
    <property type="match status" value="1"/>
</dbReference>
<dbReference type="Gene3D" id="3.90.950.10">
    <property type="match status" value="1"/>
</dbReference>
<dbReference type="HAMAP" id="MF_00528">
    <property type="entry name" value="Maf"/>
    <property type="match status" value="1"/>
</dbReference>
<dbReference type="InterPro" id="IPR029001">
    <property type="entry name" value="ITPase-like_fam"/>
</dbReference>
<dbReference type="InterPro" id="IPR003697">
    <property type="entry name" value="Maf-like"/>
</dbReference>
<dbReference type="NCBIfam" id="TIGR00172">
    <property type="entry name" value="maf"/>
    <property type="match status" value="1"/>
</dbReference>
<dbReference type="PANTHER" id="PTHR43213">
    <property type="entry name" value="BIFUNCTIONAL DTTP/UTP PYROPHOSPHATASE/METHYLTRANSFERASE PROTEIN-RELATED"/>
    <property type="match status" value="1"/>
</dbReference>
<dbReference type="PANTHER" id="PTHR43213:SF5">
    <property type="entry name" value="BIFUNCTIONAL DTTP_UTP PYROPHOSPHATASE_METHYLTRANSFERASE PROTEIN-RELATED"/>
    <property type="match status" value="1"/>
</dbReference>
<dbReference type="Pfam" id="PF02545">
    <property type="entry name" value="Maf"/>
    <property type="match status" value="1"/>
</dbReference>
<dbReference type="PIRSF" id="PIRSF006305">
    <property type="entry name" value="Maf"/>
    <property type="match status" value="1"/>
</dbReference>
<dbReference type="SUPFAM" id="SSF52972">
    <property type="entry name" value="ITPase-like"/>
    <property type="match status" value="1"/>
</dbReference>
<organism>
    <name type="scientific">Bacteroides fragilis (strain YCH46)</name>
    <dbReference type="NCBI Taxonomy" id="295405"/>
    <lineage>
        <taxon>Bacteria</taxon>
        <taxon>Pseudomonadati</taxon>
        <taxon>Bacteroidota</taxon>
        <taxon>Bacteroidia</taxon>
        <taxon>Bacteroidales</taxon>
        <taxon>Bacteroidaceae</taxon>
        <taxon>Bacteroides</taxon>
    </lineage>
</organism>
<accession>Q64R56</accession>
<protein>
    <recommendedName>
        <fullName evidence="1">dTTP/UTP pyrophosphatase</fullName>
        <shortName evidence="1">dTTPase/UTPase</shortName>
        <ecNumber evidence="1">3.6.1.9</ecNumber>
    </recommendedName>
    <alternativeName>
        <fullName evidence="1">Nucleoside triphosphate pyrophosphatase</fullName>
    </alternativeName>
    <alternativeName>
        <fullName evidence="1">Nucleotide pyrophosphatase</fullName>
        <shortName evidence="1">Nucleotide PPase</shortName>
    </alternativeName>
</protein>
<evidence type="ECO:0000255" key="1">
    <source>
        <dbReference type="HAMAP-Rule" id="MF_00528"/>
    </source>
</evidence>
<sequence length="193" mass="21667">MLANLDRYKIVLASNSPRRKELMTGLGVDYVVKTLPDVDESYPDTLQGEEIPLFIAREKAAAYQSMIGPEELLITADTIVWHEGKALGKPVGRQDAIEMLRSLSGKSHQVITGVCVTTREWQKCFAAVTDVRFAILDEDEIAYYVDHYQPMDKAGSYGVQEWIGFVGVESISGSYFNVMGLPIQKLYRELKQL</sequence>
<proteinExistence type="inferred from homology"/>
<gene>
    <name type="ordered locus">BF3281</name>
</gene>
<reference key="1">
    <citation type="journal article" date="2004" name="Proc. Natl. Acad. Sci. U.S.A.">
        <title>Genomic analysis of Bacteroides fragilis reveals extensive DNA inversions regulating cell surface adaptation.</title>
        <authorList>
            <person name="Kuwahara T."/>
            <person name="Yamashita A."/>
            <person name="Hirakawa H."/>
            <person name="Nakayama H."/>
            <person name="Toh H."/>
            <person name="Okada N."/>
            <person name="Kuhara S."/>
            <person name="Hattori M."/>
            <person name="Hayashi T."/>
            <person name="Ohnishi Y."/>
        </authorList>
    </citation>
    <scope>NUCLEOTIDE SEQUENCE [LARGE SCALE GENOMIC DNA]</scope>
    <source>
        <strain>YCH46</strain>
    </source>
</reference>
<feature type="chain" id="PRO_0000267248" description="dTTP/UTP pyrophosphatase">
    <location>
        <begin position="1"/>
        <end position="193"/>
    </location>
</feature>
<feature type="active site" description="Proton acceptor" evidence="1">
    <location>
        <position position="77"/>
    </location>
</feature>
<feature type="site" description="Important for substrate specificity" evidence="1">
    <location>
        <position position="18"/>
    </location>
</feature>
<feature type="site" description="Important for substrate specificity" evidence="1">
    <location>
        <position position="78"/>
    </location>
</feature>
<feature type="site" description="Important for substrate specificity" evidence="1">
    <location>
        <position position="160"/>
    </location>
</feature>